<feature type="chain" id="PRO_0000155055" description="Elongation factor 1-beta">
    <location>
        <begin position="1"/>
        <end position="88"/>
    </location>
</feature>
<organism>
    <name type="scientific">Haloarcula marismortui (strain ATCC 43049 / DSM 3752 / JCM 8966 / VKM B-1809)</name>
    <name type="common">Halobacterium marismortui</name>
    <dbReference type="NCBI Taxonomy" id="272569"/>
    <lineage>
        <taxon>Archaea</taxon>
        <taxon>Methanobacteriati</taxon>
        <taxon>Methanobacteriota</taxon>
        <taxon>Stenosarchaea group</taxon>
        <taxon>Halobacteria</taxon>
        <taxon>Halobacteriales</taxon>
        <taxon>Haloarculaceae</taxon>
        <taxon>Haloarcula</taxon>
    </lineage>
</organism>
<protein>
    <recommendedName>
        <fullName evidence="1">Elongation factor 1-beta</fullName>
        <shortName evidence="1">EF-1-beta</shortName>
    </recommendedName>
    <alternativeName>
        <fullName evidence="1">aEF-1beta</fullName>
    </alternativeName>
</protein>
<evidence type="ECO:0000255" key="1">
    <source>
        <dbReference type="HAMAP-Rule" id="MF_00043"/>
    </source>
</evidence>
<evidence type="ECO:0000305" key="2"/>
<reference key="1">
    <citation type="journal article" date="2004" name="Genome Res.">
        <title>Genome sequence of Haloarcula marismortui: a halophilic archaeon from the Dead Sea.</title>
        <authorList>
            <person name="Baliga N.S."/>
            <person name="Bonneau R."/>
            <person name="Facciotti M.T."/>
            <person name="Pan M."/>
            <person name="Glusman G."/>
            <person name="Deutsch E.W."/>
            <person name="Shannon P."/>
            <person name="Chiu Y."/>
            <person name="Weng R.S."/>
            <person name="Gan R.R."/>
            <person name="Hung P."/>
            <person name="Date S.V."/>
            <person name="Marcotte E."/>
            <person name="Hood L."/>
            <person name="Ng W.V."/>
        </authorList>
    </citation>
    <scope>NUCLEOTIDE SEQUENCE [LARGE SCALE GENOMIC DNA]</scope>
    <source>
        <strain>ATCC 43049 / DSM 3752 / JCM 8966 / VKM B-1809</strain>
    </source>
</reference>
<dbReference type="EMBL" id="AY596297">
    <property type="protein sequence ID" value="AAV45318.1"/>
    <property type="status" value="ALT_INIT"/>
    <property type="molecule type" value="Genomic_DNA"/>
</dbReference>
<dbReference type="RefSeq" id="WP_004962801.1">
    <property type="nucleotide sequence ID" value="NZ_CP039138.1"/>
</dbReference>
<dbReference type="SMR" id="Q5V584"/>
<dbReference type="STRING" id="272569.rrnAC0261"/>
<dbReference type="PaxDb" id="272569-rrnAC0261"/>
<dbReference type="EnsemblBacteria" id="AAV45318">
    <property type="protein sequence ID" value="AAV45318"/>
    <property type="gene ID" value="rrnAC0261"/>
</dbReference>
<dbReference type="KEGG" id="hma:rrnAC0261"/>
<dbReference type="PATRIC" id="fig|272569.17.peg.1056"/>
<dbReference type="eggNOG" id="arCOG01988">
    <property type="taxonomic scope" value="Archaea"/>
</dbReference>
<dbReference type="HOGENOM" id="CLU_165896_0_0_2"/>
<dbReference type="Proteomes" id="UP000001169">
    <property type="component" value="Chromosome I"/>
</dbReference>
<dbReference type="GO" id="GO:0003746">
    <property type="term" value="F:translation elongation factor activity"/>
    <property type="evidence" value="ECO:0007669"/>
    <property type="project" value="UniProtKB-UniRule"/>
</dbReference>
<dbReference type="CDD" id="cd00292">
    <property type="entry name" value="EF1B"/>
    <property type="match status" value="1"/>
</dbReference>
<dbReference type="Gene3D" id="3.30.70.60">
    <property type="match status" value="1"/>
</dbReference>
<dbReference type="HAMAP" id="MF_00043">
    <property type="entry name" value="EF1_beta"/>
    <property type="match status" value="1"/>
</dbReference>
<dbReference type="InterPro" id="IPR036219">
    <property type="entry name" value="eEF-1beta-like_sf"/>
</dbReference>
<dbReference type="InterPro" id="IPR014038">
    <property type="entry name" value="EF1B_bsu/dsu_GNE"/>
</dbReference>
<dbReference type="InterPro" id="IPR014717">
    <property type="entry name" value="Transl_elong_EF1B/ribsomal_bS6"/>
</dbReference>
<dbReference type="InterPro" id="IPR004542">
    <property type="entry name" value="Transl_elong_EF1B_B_arc"/>
</dbReference>
<dbReference type="NCBIfam" id="TIGR00489">
    <property type="entry name" value="aEF-1_beta"/>
    <property type="match status" value="1"/>
</dbReference>
<dbReference type="NCBIfam" id="NF001670">
    <property type="entry name" value="PRK00435.1"/>
    <property type="match status" value="1"/>
</dbReference>
<dbReference type="PANTHER" id="PTHR39647">
    <property type="entry name" value="ELONGATION FACTOR 1-BETA"/>
    <property type="match status" value="1"/>
</dbReference>
<dbReference type="PANTHER" id="PTHR39647:SF1">
    <property type="entry name" value="ELONGATION FACTOR 1-BETA"/>
    <property type="match status" value="1"/>
</dbReference>
<dbReference type="Pfam" id="PF00736">
    <property type="entry name" value="EF1_GNE"/>
    <property type="match status" value="1"/>
</dbReference>
<dbReference type="PIRSF" id="PIRSF006521">
    <property type="entry name" value="Transl_elong_EF1B_B_arc"/>
    <property type="match status" value="1"/>
</dbReference>
<dbReference type="SMART" id="SM00888">
    <property type="entry name" value="EF1_GNE"/>
    <property type="match status" value="1"/>
</dbReference>
<dbReference type="SUPFAM" id="SSF54984">
    <property type="entry name" value="eEF-1beta-like"/>
    <property type="match status" value="1"/>
</dbReference>
<sequence length="88" mass="9358">MGKVAAKIKVMPESPEVDLDDLQERLEGVLPEGTKINGFEREDVAFGLVALTPTVIVPDDTGGTEAVEEAFANVDDVESVSIESTGRL</sequence>
<proteinExistence type="inferred from homology"/>
<keyword id="KW-0251">Elongation factor</keyword>
<keyword id="KW-0648">Protein biosynthesis</keyword>
<keyword id="KW-1185">Reference proteome</keyword>
<accession>Q5V584</accession>
<name>EF1B_HALMA</name>
<comment type="function">
    <text evidence="1">Promotes the exchange of GDP for GTP in EF-1-alpha/GDP, thus allowing the regeneration of EF-1-alpha/GTP that could then be used to form the ternary complex EF-1-alpha/GTP/AAtRNA.</text>
</comment>
<comment type="similarity">
    <text evidence="1">Belongs to the EF-1-beta/EF-1-delta family.</text>
</comment>
<comment type="sequence caution" evidence="2">
    <conflict type="erroneous initiation">
        <sequence resource="EMBL-CDS" id="AAV45318"/>
    </conflict>
</comment>
<gene>
    <name evidence="1" type="primary">ef1b</name>
    <name type="ordered locus">rrnAC0261</name>
</gene>